<protein>
    <recommendedName>
        <fullName>Ubiquitin-conjugating enzyme E2 G2</fullName>
        <ecNumber>2.3.2.23</ecNumber>
    </recommendedName>
    <alternativeName>
        <fullName>E2 ubiquitin-conjugating enzyme G2</fullName>
    </alternativeName>
    <alternativeName>
        <fullName>Ubiquitin carrier protein G2</fullName>
    </alternativeName>
    <alternativeName>
        <fullName>Ubiquitin-protein ligase G2</fullName>
    </alternativeName>
</protein>
<keyword id="KW-0007">Acetylation</keyword>
<keyword id="KW-0067">ATP-binding</keyword>
<keyword id="KW-0256">Endoplasmic reticulum</keyword>
<keyword id="KW-0551">Lipid droplet</keyword>
<keyword id="KW-0547">Nucleotide-binding</keyword>
<keyword id="KW-1185">Reference proteome</keyword>
<keyword id="KW-0808">Transferase</keyword>
<keyword id="KW-0833">Ubl conjugation pathway</keyword>
<dbReference type="EC" id="2.3.2.23"/>
<dbReference type="EMBL" id="CR857277">
    <property type="protein sequence ID" value="CAH89573.1"/>
    <property type="molecule type" value="mRNA"/>
</dbReference>
<dbReference type="RefSeq" id="NP_001124691.1">
    <property type="nucleotide sequence ID" value="NM_001131219.1"/>
</dbReference>
<dbReference type="BMRB" id="Q5RF84"/>
<dbReference type="SMR" id="Q5RF84"/>
<dbReference type="FunCoup" id="Q5RF84">
    <property type="interactions" value="2611"/>
</dbReference>
<dbReference type="STRING" id="9601.ENSPPYP00000012839"/>
<dbReference type="Ensembl" id="ENSPPYT00000052231.1">
    <property type="protein sequence ID" value="ENSPPYP00000034953.1"/>
    <property type="gene ID" value="ENSPPYG00000035359.1"/>
</dbReference>
<dbReference type="GeneID" id="100171538"/>
<dbReference type="KEGG" id="pon:100171538"/>
<dbReference type="CTD" id="7327"/>
<dbReference type="eggNOG" id="KOG0426">
    <property type="taxonomic scope" value="Eukaryota"/>
</dbReference>
<dbReference type="GeneTree" id="ENSGT00940000158193"/>
<dbReference type="InParanoid" id="Q5RF84"/>
<dbReference type="OMA" id="APDGMFT"/>
<dbReference type="OrthoDB" id="19692at2759"/>
<dbReference type="UniPathway" id="UPA00143"/>
<dbReference type="Proteomes" id="UP000001595">
    <property type="component" value="Chromosome 21"/>
</dbReference>
<dbReference type="GO" id="GO:0005829">
    <property type="term" value="C:cytosol"/>
    <property type="evidence" value="ECO:0007669"/>
    <property type="project" value="Ensembl"/>
</dbReference>
<dbReference type="GO" id="GO:0005783">
    <property type="term" value="C:endoplasmic reticulum"/>
    <property type="evidence" value="ECO:0000250"/>
    <property type="project" value="UniProtKB"/>
</dbReference>
<dbReference type="GO" id="GO:0005811">
    <property type="term" value="C:lipid droplet"/>
    <property type="evidence" value="ECO:0000250"/>
    <property type="project" value="UniProtKB"/>
</dbReference>
<dbReference type="GO" id="GO:0005524">
    <property type="term" value="F:ATP binding"/>
    <property type="evidence" value="ECO:0007669"/>
    <property type="project" value="UniProtKB-KW"/>
</dbReference>
<dbReference type="GO" id="GO:0042802">
    <property type="term" value="F:identical protein binding"/>
    <property type="evidence" value="ECO:0007669"/>
    <property type="project" value="Ensembl"/>
</dbReference>
<dbReference type="GO" id="GO:0061631">
    <property type="term" value="F:ubiquitin conjugating enzyme activity"/>
    <property type="evidence" value="ECO:0007669"/>
    <property type="project" value="UniProtKB-EC"/>
</dbReference>
<dbReference type="GO" id="GO:0004842">
    <property type="term" value="F:ubiquitin-protein transferase activity"/>
    <property type="evidence" value="ECO:0000250"/>
    <property type="project" value="UniProtKB"/>
</dbReference>
<dbReference type="GO" id="GO:0035458">
    <property type="term" value="P:cellular response to interferon-beta"/>
    <property type="evidence" value="ECO:0007669"/>
    <property type="project" value="Ensembl"/>
</dbReference>
<dbReference type="GO" id="GO:0036503">
    <property type="term" value="P:ERAD pathway"/>
    <property type="evidence" value="ECO:0000250"/>
    <property type="project" value="UniProtKB"/>
</dbReference>
<dbReference type="GO" id="GO:1904153">
    <property type="term" value="P:negative regulation of retrograde protein transport, ER to cytosol"/>
    <property type="evidence" value="ECO:0007669"/>
    <property type="project" value="Ensembl"/>
</dbReference>
<dbReference type="GO" id="GO:0070936">
    <property type="term" value="P:protein K48-linked ubiquitination"/>
    <property type="evidence" value="ECO:0000250"/>
    <property type="project" value="UniProtKB"/>
</dbReference>
<dbReference type="CDD" id="cd23796">
    <property type="entry name" value="UBCc_UBE2G2"/>
    <property type="match status" value="1"/>
</dbReference>
<dbReference type="FunFam" id="3.10.110.10:FF:000008">
    <property type="entry name" value="Ubiquitin-conjugating enzyme E2 G2"/>
    <property type="match status" value="1"/>
</dbReference>
<dbReference type="Gene3D" id="3.10.110.10">
    <property type="entry name" value="Ubiquitin Conjugating Enzyme"/>
    <property type="match status" value="1"/>
</dbReference>
<dbReference type="InterPro" id="IPR050113">
    <property type="entry name" value="Ub_conjugating_enzyme"/>
</dbReference>
<dbReference type="InterPro" id="IPR000608">
    <property type="entry name" value="UBQ-conjugat_E2_core"/>
</dbReference>
<dbReference type="InterPro" id="IPR023313">
    <property type="entry name" value="UBQ-conjugating_AS"/>
</dbReference>
<dbReference type="InterPro" id="IPR016135">
    <property type="entry name" value="UBQ-conjugating_enzyme/RWD"/>
</dbReference>
<dbReference type="PANTHER" id="PTHR24067">
    <property type="entry name" value="UBIQUITIN-CONJUGATING ENZYME E2"/>
    <property type="match status" value="1"/>
</dbReference>
<dbReference type="Pfam" id="PF00179">
    <property type="entry name" value="UQ_con"/>
    <property type="match status" value="1"/>
</dbReference>
<dbReference type="SMART" id="SM00212">
    <property type="entry name" value="UBCc"/>
    <property type="match status" value="1"/>
</dbReference>
<dbReference type="SUPFAM" id="SSF54495">
    <property type="entry name" value="UBC-like"/>
    <property type="match status" value="1"/>
</dbReference>
<dbReference type="PROSITE" id="PS00183">
    <property type="entry name" value="UBC_1"/>
    <property type="match status" value="1"/>
</dbReference>
<dbReference type="PROSITE" id="PS50127">
    <property type="entry name" value="UBC_2"/>
    <property type="match status" value="1"/>
</dbReference>
<organism>
    <name type="scientific">Pongo abelii</name>
    <name type="common">Sumatran orangutan</name>
    <name type="synonym">Pongo pygmaeus abelii</name>
    <dbReference type="NCBI Taxonomy" id="9601"/>
    <lineage>
        <taxon>Eukaryota</taxon>
        <taxon>Metazoa</taxon>
        <taxon>Chordata</taxon>
        <taxon>Craniata</taxon>
        <taxon>Vertebrata</taxon>
        <taxon>Euteleostomi</taxon>
        <taxon>Mammalia</taxon>
        <taxon>Eutheria</taxon>
        <taxon>Euarchontoglires</taxon>
        <taxon>Primates</taxon>
        <taxon>Haplorrhini</taxon>
        <taxon>Catarrhini</taxon>
        <taxon>Hominidae</taxon>
        <taxon>Pongo</taxon>
    </lineage>
</organism>
<feature type="initiator methionine" description="Removed" evidence="1">
    <location>
        <position position="1"/>
    </location>
</feature>
<feature type="chain" id="PRO_0000082485" description="Ubiquitin-conjugating enzyme E2 G2">
    <location>
        <begin position="2"/>
        <end position="165"/>
    </location>
</feature>
<feature type="domain" description="UBC core" evidence="3">
    <location>
        <begin position="4"/>
        <end position="164"/>
    </location>
</feature>
<feature type="active site" description="Glycyl thioester intermediate" evidence="3 4">
    <location>
        <position position="89"/>
    </location>
</feature>
<feature type="modified residue" description="N-acetylalanine" evidence="1">
    <location>
        <position position="2"/>
    </location>
</feature>
<reference key="1">
    <citation type="submission" date="2004-11" db="EMBL/GenBank/DDBJ databases">
        <authorList>
            <consortium name="The German cDNA consortium"/>
        </authorList>
    </citation>
    <scope>NUCLEOTIDE SEQUENCE [LARGE SCALE MRNA]</scope>
    <source>
        <tissue>Kidney</tissue>
    </source>
</reference>
<evidence type="ECO:0000250" key="1">
    <source>
        <dbReference type="UniProtKB" id="P60604"/>
    </source>
</evidence>
<evidence type="ECO:0000250" key="2">
    <source>
        <dbReference type="UniProtKB" id="P60605"/>
    </source>
</evidence>
<evidence type="ECO:0000255" key="3">
    <source>
        <dbReference type="PROSITE-ProRule" id="PRU00388"/>
    </source>
</evidence>
<evidence type="ECO:0000255" key="4">
    <source>
        <dbReference type="PROSITE-ProRule" id="PRU10133"/>
    </source>
</evidence>
<gene>
    <name evidence="1" type="primary">UBE2G2</name>
    <name evidence="1" type="synonym">UBC7</name>
</gene>
<accession>Q5RF84</accession>
<comment type="function">
    <text evidence="1">Accepts ubiquitin from the E1 complex and catalyzes its covalent attachment to other proteins. In vitro catalyzes 'Lys-48'-linked polyubiquitination. Involved in endoplasmic reticulum-associated degradation (ERAD). Required for sterol-induced ubiquitination of 3-hydroxy-3-methylglutaryl coenzyme A reductase and its subsequent proteasomal degradation.</text>
</comment>
<comment type="catalytic activity">
    <reaction evidence="1 3 4">
        <text>S-ubiquitinyl-[E1 ubiquitin-activating enzyme]-L-cysteine + [E2 ubiquitin-conjugating enzyme]-L-cysteine = [E1 ubiquitin-activating enzyme]-L-cysteine + S-ubiquitinyl-[E2 ubiquitin-conjugating enzyme]-L-cysteine.</text>
        <dbReference type="EC" id="2.3.2.23"/>
    </reaction>
</comment>
<comment type="pathway">
    <text evidence="3">Protein modification; protein ubiquitination.</text>
</comment>
<comment type="subunit">
    <text evidence="1">Interacts with AUP1 (via C-terminus); the interaction recruits UBE2G2 to lipid droplets. Interacts with ubiquitin ligases AMFR/gp78 and RNF139/TRC8; recruitment to lipid droplets by AUP1 facilitates interaction of UBE2G2 with AMFR and RNF139, leading to sterol-induced ubiquitination of 3-hydroxy-3-methylglutaryl coenzyme A reductase and its subsequent proteasomal degradation.</text>
</comment>
<comment type="subcellular location">
    <subcellularLocation>
        <location evidence="2">Endoplasmic reticulum</location>
    </subcellularLocation>
    <subcellularLocation>
        <location evidence="1">Lipid droplet</location>
    </subcellularLocation>
</comment>
<comment type="similarity">
    <text evidence="3">Belongs to the ubiquitin-conjugating enzyme family.</text>
</comment>
<sequence length="165" mass="18566">MAGTALKRLMAEYKQLTLNPPEGIVAGPMNEENFFEWEALIMGPEDTCFEFGVFPAILSFPLDYPLSPPKMRFTCEMFHPNIYPDGRVCISILHAPGDDPMGYESSAERWSPVQSVEKILLSVVSMLAEPNDESGANVDASKMWRDDREQFYKIAKQIVQKSLGL</sequence>
<proteinExistence type="evidence at transcript level"/>
<name>UB2G2_PONAB</name>